<proteinExistence type="inferred from homology"/>
<feature type="chain" id="PRO_1000057998" description="Phosphoglycerate kinase">
    <location>
        <begin position="1"/>
        <end position="396"/>
    </location>
</feature>
<feature type="binding site" evidence="1">
    <location>
        <begin position="21"/>
        <end position="23"/>
    </location>
    <ligand>
        <name>substrate</name>
    </ligand>
</feature>
<feature type="binding site" evidence="1">
    <location>
        <position position="36"/>
    </location>
    <ligand>
        <name>substrate</name>
    </ligand>
</feature>
<feature type="binding site" evidence="1">
    <location>
        <begin position="59"/>
        <end position="62"/>
    </location>
    <ligand>
        <name>substrate</name>
    </ligand>
</feature>
<feature type="binding site" evidence="1">
    <location>
        <position position="118"/>
    </location>
    <ligand>
        <name>substrate</name>
    </ligand>
</feature>
<feature type="binding site" evidence="1">
    <location>
        <position position="151"/>
    </location>
    <ligand>
        <name>substrate</name>
    </ligand>
</feature>
<feature type="binding site" evidence="1">
    <location>
        <position position="201"/>
    </location>
    <ligand>
        <name>ATP</name>
        <dbReference type="ChEBI" id="CHEBI:30616"/>
    </ligand>
</feature>
<feature type="binding site" evidence="1">
    <location>
        <position position="323"/>
    </location>
    <ligand>
        <name>ATP</name>
        <dbReference type="ChEBI" id="CHEBI:30616"/>
    </ligand>
</feature>
<feature type="binding site" evidence="1">
    <location>
        <begin position="353"/>
        <end position="356"/>
    </location>
    <ligand>
        <name>ATP</name>
        <dbReference type="ChEBI" id="CHEBI:30616"/>
    </ligand>
</feature>
<gene>
    <name evidence="1" type="primary">pgk</name>
    <name type="ordered locus">GbCGDNIH1_0312</name>
</gene>
<keyword id="KW-0067">ATP-binding</keyword>
<keyword id="KW-0963">Cytoplasm</keyword>
<keyword id="KW-0324">Glycolysis</keyword>
<keyword id="KW-0418">Kinase</keyword>
<keyword id="KW-0547">Nucleotide-binding</keyword>
<keyword id="KW-1185">Reference proteome</keyword>
<keyword id="KW-0808">Transferase</keyword>
<organism>
    <name type="scientific">Granulibacter bethesdensis (strain ATCC BAA-1260 / CGDNIH1)</name>
    <dbReference type="NCBI Taxonomy" id="391165"/>
    <lineage>
        <taxon>Bacteria</taxon>
        <taxon>Pseudomonadati</taxon>
        <taxon>Pseudomonadota</taxon>
        <taxon>Alphaproteobacteria</taxon>
        <taxon>Acetobacterales</taxon>
        <taxon>Acetobacteraceae</taxon>
        <taxon>Granulibacter</taxon>
    </lineage>
</organism>
<name>PGK_GRABC</name>
<evidence type="ECO:0000255" key="1">
    <source>
        <dbReference type="HAMAP-Rule" id="MF_00145"/>
    </source>
</evidence>
<sequence length="396" mass="41837">MSFRTLDGLDVRGRRVLVRLDLNVPMRDGRVSDLTRIERQAPTVRELAEGGARVIVMSHFDRPKGKRVQEMSLRPIAEALGAALGQPVAFVDDCIGGTVEEAVAGMKDGDVLVLENTRFHAAEEKNDPEFSRLLASLAEVYVNDAFSAAHRAHASTHGVTAHLPAYAGRLMQREVEALELALGSPTRPVAAIVGGAKVSTKLDLLGNLSTKVDVLVIGGAMANTFLAAQGIKVGKSLQEAEMHDTARAILETAKKAGCEILLPVDAVTATEFRADPPTRTVSINEIPDDAMMLDVGPETVRLLTERLSGVKTLVWNGPLGAFEISPFDKATVALAQSVAGLTETAGLVSVAGGGDTVAALKHAGVVERLTYVSAAGGAFLEWMEGKELPGVAVLRA</sequence>
<reference key="1">
    <citation type="journal article" date="2007" name="J. Bacteriol.">
        <title>Genome sequence analysis of the emerging human pathogenic acetic acid bacterium Granulibacter bethesdensis.</title>
        <authorList>
            <person name="Greenberg D.E."/>
            <person name="Porcella S.F."/>
            <person name="Zelazny A.M."/>
            <person name="Virtaneva K."/>
            <person name="Sturdevant D.E."/>
            <person name="Kupko J.J. III"/>
            <person name="Barbian K.D."/>
            <person name="Babar A."/>
            <person name="Dorward D.W."/>
            <person name="Holland S.M."/>
        </authorList>
    </citation>
    <scope>NUCLEOTIDE SEQUENCE [LARGE SCALE GENOMIC DNA]</scope>
    <source>
        <strain>ATCC BAA-1260 / CGDNIH1</strain>
    </source>
</reference>
<protein>
    <recommendedName>
        <fullName evidence="1">Phosphoglycerate kinase</fullName>
        <ecNumber evidence="1">2.7.2.3</ecNumber>
    </recommendedName>
</protein>
<comment type="catalytic activity">
    <reaction evidence="1">
        <text>(2R)-3-phosphoglycerate + ATP = (2R)-3-phospho-glyceroyl phosphate + ADP</text>
        <dbReference type="Rhea" id="RHEA:14801"/>
        <dbReference type="ChEBI" id="CHEBI:30616"/>
        <dbReference type="ChEBI" id="CHEBI:57604"/>
        <dbReference type="ChEBI" id="CHEBI:58272"/>
        <dbReference type="ChEBI" id="CHEBI:456216"/>
        <dbReference type="EC" id="2.7.2.3"/>
    </reaction>
</comment>
<comment type="pathway">
    <text evidence="1">Carbohydrate degradation; glycolysis; pyruvate from D-glyceraldehyde 3-phosphate: step 2/5.</text>
</comment>
<comment type="subunit">
    <text evidence="1">Monomer.</text>
</comment>
<comment type="subcellular location">
    <subcellularLocation>
        <location evidence="1">Cytoplasm</location>
    </subcellularLocation>
</comment>
<comment type="similarity">
    <text evidence="1">Belongs to the phosphoglycerate kinase family.</text>
</comment>
<accession>Q0BVE2</accession>
<dbReference type="EC" id="2.7.2.3" evidence="1"/>
<dbReference type="EMBL" id="CP000394">
    <property type="protein sequence ID" value="ABI61210.1"/>
    <property type="molecule type" value="Genomic_DNA"/>
</dbReference>
<dbReference type="RefSeq" id="WP_011631020.1">
    <property type="nucleotide sequence ID" value="NC_008343.2"/>
</dbReference>
<dbReference type="SMR" id="Q0BVE2"/>
<dbReference type="STRING" id="391165.GbCGDNIH1_0312"/>
<dbReference type="GeneID" id="69744571"/>
<dbReference type="KEGG" id="gbe:GbCGDNIH1_0312"/>
<dbReference type="eggNOG" id="COG0126">
    <property type="taxonomic scope" value="Bacteria"/>
</dbReference>
<dbReference type="HOGENOM" id="CLU_025427_0_2_5"/>
<dbReference type="OrthoDB" id="9808460at2"/>
<dbReference type="UniPathway" id="UPA00109">
    <property type="reaction ID" value="UER00185"/>
</dbReference>
<dbReference type="Proteomes" id="UP000001963">
    <property type="component" value="Chromosome"/>
</dbReference>
<dbReference type="GO" id="GO:0005829">
    <property type="term" value="C:cytosol"/>
    <property type="evidence" value="ECO:0007669"/>
    <property type="project" value="TreeGrafter"/>
</dbReference>
<dbReference type="GO" id="GO:0043531">
    <property type="term" value="F:ADP binding"/>
    <property type="evidence" value="ECO:0007669"/>
    <property type="project" value="TreeGrafter"/>
</dbReference>
<dbReference type="GO" id="GO:0005524">
    <property type="term" value="F:ATP binding"/>
    <property type="evidence" value="ECO:0007669"/>
    <property type="project" value="UniProtKB-KW"/>
</dbReference>
<dbReference type="GO" id="GO:0004618">
    <property type="term" value="F:phosphoglycerate kinase activity"/>
    <property type="evidence" value="ECO:0007669"/>
    <property type="project" value="UniProtKB-UniRule"/>
</dbReference>
<dbReference type="GO" id="GO:0006094">
    <property type="term" value="P:gluconeogenesis"/>
    <property type="evidence" value="ECO:0007669"/>
    <property type="project" value="TreeGrafter"/>
</dbReference>
<dbReference type="GO" id="GO:0006096">
    <property type="term" value="P:glycolytic process"/>
    <property type="evidence" value="ECO:0007669"/>
    <property type="project" value="UniProtKB-UniRule"/>
</dbReference>
<dbReference type="CDD" id="cd00318">
    <property type="entry name" value="Phosphoglycerate_kinase"/>
    <property type="match status" value="1"/>
</dbReference>
<dbReference type="FunFam" id="3.40.50.1260:FF:000006">
    <property type="entry name" value="Phosphoglycerate kinase"/>
    <property type="match status" value="1"/>
</dbReference>
<dbReference type="FunFam" id="3.40.50.1260:FF:000031">
    <property type="entry name" value="Phosphoglycerate kinase 1"/>
    <property type="match status" value="1"/>
</dbReference>
<dbReference type="Gene3D" id="3.40.50.1260">
    <property type="entry name" value="Phosphoglycerate kinase, N-terminal domain"/>
    <property type="match status" value="2"/>
</dbReference>
<dbReference type="HAMAP" id="MF_00145">
    <property type="entry name" value="Phosphoglyc_kinase"/>
    <property type="match status" value="1"/>
</dbReference>
<dbReference type="InterPro" id="IPR001576">
    <property type="entry name" value="Phosphoglycerate_kinase"/>
</dbReference>
<dbReference type="InterPro" id="IPR015911">
    <property type="entry name" value="Phosphoglycerate_kinase_CS"/>
</dbReference>
<dbReference type="InterPro" id="IPR015824">
    <property type="entry name" value="Phosphoglycerate_kinase_N"/>
</dbReference>
<dbReference type="InterPro" id="IPR036043">
    <property type="entry name" value="Phosphoglycerate_kinase_sf"/>
</dbReference>
<dbReference type="PANTHER" id="PTHR11406">
    <property type="entry name" value="PHOSPHOGLYCERATE KINASE"/>
    <property type="match status" value="1"/>
</dbReference>
<dbReference type="PANTHER" id="PTHR11406:SF23">
    <property type="entry name" value="PHOSPHOGLYCERATE KINASE 1, CHLOROPLASTIC-RELATED"/>
    <property type="match status" value="1"/>
</dbReference>
<dbReference type="Pfam" id="PF00162">
    <property type="entry name" value="PGK"/>
    <property type="match status" value="1"/>
</dbReference>
<dbReference type="PIRSF" id="PIRSF000724">
    <property type="entry name" value="Pgk"/>
    <property type="match status" value="1"/>
</dbReference>
<dbReference type="PRINTS" id="PR00477">
    <property type="entry name" value="PHGLYCKINASE"/>
</dbReference>
<dbReference type="SUPFAM" id="SSF53748">
    <property type="entry name" value="Phosphoglycerate kinase"/>
    <property type="match status" value="1"/>
</dbReference>
<dbReference type="PROSITE" id="PS00111">
    <property type="entry name" value="PGLYCERATE_KINASE"/>
    <property type="match status" value="1"/>
</dbReference>